<sequence length="173" mass="19470">MAEKRNIFLVGPMGAGKSTIGRQLAQQLNMEFYDSDQEIEKRTGADVGWVFDVEGEDGFRNREEKVINELTEKQGIVLATGGGSVKSRETRNRLSARGVVVYLETTIEKQLARTQRDKKRPLLQVEAPPREVLEALANERNPLYEEIADVTIRTDDQSAKVVANQIIHMLESN</sequence>
<dbReference type="EC" id="2.7.1.71" evidence="1"/>
<dbReference type="EMBL" id="CP001120">
    <property type="protein sequence ID" value="ACF66595.1"/>
    <property type="molecule type" value="Genomic_DNA"/>
</dbReference>
<dbReference type="RefSeq" id="WP_000818621.1">
    <property type="nucleotide sequence ID" value="NC_011083.1"/>
</dbReference>
<dbReference type="SMR" id="B4TKR3"/>
<dbReference type="GeneID" id="66757820"/>
<dbReference type="KEGG" id="seh:SeHA_C3793"/>
<dbReference type="HOGENOM" id="CLU_057607_2_2_6"/>
<dbReference type="UniPathway" id="UPA00053">
    <property type="reaction ID" value="UER00088"/>
</dbReference>
<dbReference type="Proteomes" id="UP000001866">
    <property type="component" value="Chromosome"/>
</dbReference>
<dbReference type="GO" id="GO:0005829">
    <property type="term" value="C:cytosol"/>
    <property type="evidence" value="ECO:0007669"/>
    <property type="project" value="TreeGrafter"/>
</dbReference>
<dbReference type="GO" id="GO:0005524">
    <property type="term" value="F:ATP binding"/>
    <property type="evidence" value="ECO:0007669"/>
    <property type="project" value="UniProtKB-UniRule"/>
</dbReference>
<dbReference type="GO" id="GO:0000287">
    <property type="term" value="F:magnesium ion binding"/>
    <property type="evidence" value="ECO:0007669"/>
    <property type="project" value="UniProtKB-UniRule"/>
</dbReference>
<dbReference type="GO" id="GO:0004765">
    <property type="term" value="F:shikimate kinase activity"/>
    <property type="evidence" value="ECO:0007669"/>
    <property type="project" value="UniProtKB-UniRule"/>
</dbReference>
<dbReference type="GO" id="GO:0008652">
    <property type="term" value="P:amino acid biosynthetic process"/>
    <property type="evidence" value="ECO:0007669"/>
    <property type="project" value="UniProtKB-KW"/>
</dbReference>
<dbReference type="GO" id="GO:0009073">
    <property type="term" value="P:aromatic amino acid family biosynthetic process"/>
    <property type="evidence" value="ECO:0007669"/>
    <property type="project" value="UniProtKB-KW"/>
</dbReference>
<dbReference type="GO" id="GO:0009423">
    <property type="term" value="P:chorismate biosynthetic process"/>
    <property type="evidence" value="ECO:0007669"/>
    <property type="project" value="UniProtKB-UniRule"/>
</dbReference>
<dbReference type="CDD" id="cd00464">
    <property type="entry name" value="SK"/>
    <property type="match status" value="1"/>
</dbReference>
<dbReference type="FunFam" id="3.40.50.300:FF:000099">
    <property type="entry name" value="Shikimate kinase 1"/>
    <property type="match status" value="1"/>
</dbReference>
<dbReference type="Gene3D" id="3.40.50.300">
    <property type="entry name" value="P-loop containing nucleotide triphosphate hydrolases"/>
    <property type="match status" value="1"/>
</dbReference>
<dbReference type="HAMAP" id="MF_00109">
    <property type="entry name" value="Shikimate_kinase"/>
    <property type="match status" value="1"/>
</dbReference>
<dbReference type="InterPro" id="IPR027417">
    <property type="entry name" value="P-loop_NTPase"/>
</dbReference>
<dbReference type="InterPro" id="IPR031322">
    <property type="entry name" value="Shikimate/glucono_kinase"/>
</dbReference>
<dbReference type="InterPro" id="IPR000623">
    <property type="entry name" value="Shikimate_kinase/TSH1"/>
</dbReference>
<dbReference type="InterPro" id="IPR023000">
    <property type="entry name" value="Shikimate_kinase_CS"/>
</dbReference>
<dbReference type="NCBIfam" id="NF003456">
    <property type="entry name" value="PRK05057.1"/>
    <property type="match status" value="1"/>
</dbReference>
<dbReference type="PANTHER" id="PTHR21087">
    <property type="entry name" value="SHIKIMATE KINASE"/>
    <property type="match status" value="1"/>
</dbReference>
<dbReference type="PANTHER" id="PTHR21087:SF16">
    <property type="entry name" value="SHIKIMATE KINASE 1, CHLOROPLASTIC"/>
    <property type="match status" value="1"/>
</dbReference>
<dbReference type="Pfam" id="PF01202">
    <property type="entry name" value="SKI"/>
    <property type="match status" value="1"/>
</dbReference>
<dbReference type="PRINTS" id="PR01100">
    <property type="entry name" value="SHIKIMTKNASE"/>
</dbReference>
<dbReference type="SUPFAM" id="SSF52540">
    <property type="entry name" value="P-loop containing nucleoside triphosphate hydrolases"/>
    <property type="match status" value="1"/>
</dbReference>
<dbReference type="PROSITE" id="PS01128">
    <property type="entry name" value="SHIKIMATE_KINASE"/>
    <property type="match status" value="1"/>
</dbReference>
<evidence type="ECO:0000255" key="1">
    <source>
        <dbReference type="HAMAP-Rule" id="MF_00109"/>
    </source>
</evidence>
<name>AROK_SALHS</name>
<gene>
    <name evidence="1" type="primary">aroK</name>
    <name type="ordered locus">SeHA_C3793</name>
</gene>
<comment type="function">
    <text evidence="1">Catalyzes the specific phosphorylation of the 3-hydroxyl group of shikimic acid using ATP as a cosubstrate.</text>
</comment>
<comment type="catalytic activity">
    <reaction evidence="1">
        <text>shikimate + ATP = 3-phosphoshikimate + ADP + H(+)</text>
        <dbReference type="Rhea" id="RHEA:13121"/>
        <dbReference type="ChEBI" id="CHEBI:15378"/>
        <dbReference type="ChEBI" id="CHEBI:30616"/>
        <dbReference type="ChEBI" id="CHEBI:36208"/>
        <dbReference type="ChEBI" id="CHEBI:145989"/>
        <dbReference type="ChEBI" id="CHEBI:456216"/>
        <dbReference type="EC" id="2.7.1.71"/>
    </reaction>
</comment>
<comment type="cofactor">
    <cofactor evidence="1">
        <name>Mg(2+)</name>
        <dbReference type="ChEBI" id="CHEBI:18420"/>
    </cofactor>
    <text evidence="1">Binds 1 Mg(2+) ion per subunit.</text>
</comment>
<comment type="pathway">
    <text evidence="1">Metabolic intermediate biosynthesis; chorismate biosynthesis; chorismate from D-erythrose 4-phosphate and phosphoenolpyruvate: step 5/7.</text>
</comment>
<comment type="subunit">
    <text evidence="1">Monomer.</text>
</comment>
<comment type="subcellular location">
    <subcellularLocation>
        <location evidence="1">Cytoplasm</location>
    </subcellularLocation>
</comment>
<comment type="similarity">
    <text evidence="1">Belongs to the shikimate kinase family.</text>
</comment>
<reference key="1">
    <citation type="journal article" date="2011" name="J. Bacteriol.">
        <title>Comparative genomics of 28 Salmonella enterica isolates: evidence for CRISPR-mediated adaptive sublineage evolution.</title>
        <authorList>
            <person name="Fricke W.F."/>
            <person name="Mammel M.K."/>
            <person name="McDermott P.F."/>
            <person name="Tartera C."/>
            <person name="White D.G."/>
            <person name="Leclerc J.E."/>
            <person name="Ravel J."/>
            <person name="Cebula T.A."/>
        </authorList>
    </citation>
    <scope>NUCLEOTIDE SEQUENCE [LARGE SCALE GENOMIC DNA]</scope>
    <source>
        <strain>SL476</strain>
    </source>
</reference>
<protein>
    <recommendedName>
        <fullName evidence="1">Shikimate kinase 1</fullName>
        <shortName evidence="1">SK 1</shortName>
        <ecNumber evidence="1">2.7.1.71</ecNumber>
    </recommendedName>
</protein>
<organism>
    <name type="scientific">Salmonella heidelberg (strain SL476)</name>
    <dbReference type="NCBI Taxonomy" id="454169"/>
    <lineage>
        <taxon>Bacteria</taxon>
        <taxon>Pseudomonadati</taxon>
        <taxon>Pseudomonadota</taxon>
        <taxon>Gammaproteobacteria</taxon>
        <taxon>Enterobacterales</taxon>
        <taxon>Enterobacteriaceae</taxon>
        <taxon>Salmonella</taxon>
    </lineage>
</organism>
<keyword id="KW-0028">Amino-acid biosynthesis</keyword>
<keyword id="KW-0057">Aromatic amino acid biosynthesis</keyword>
<keyword id="KW-0067">ATP-binding</keyword>
<keyword id="KW-0963">Cytoplasm</keyword>
<keyword id="KW-0418">Kinase</keyword>
<keyword id="KW-0460">Magnesium</keyword>
<keyword id="KW-0479">Metal-binding</keyword>
<keyword id="KW-0547">Nucleotide-binding</keyword>
<keyword id="KW-0808">Transferase</keyword>
<accession>B4TKR3</accession>
<feature type="chain" id="PRO_1000094408" description="Shikimate kinase 1">
    <location>
        <begin position="1"/>
        <end position="173"/>
    </location>
</feature>
<feature type="binding site" evidence="1">
    <location>
        <begin position="14"/>
        <end position="19"/>
    </location>
    <ligand>
        <name>ATP</name>
        <dbReference type="ChEBI" id="CHEBI:30616"/>
    </ligand>
</feature>
<feature type="binding site" evidence="1">
    <location>
        <position position="18"/>
    </location>
    <ligand>
        <name>Mg(2+)</name>
        <dbReference type="ChEBI" id="CHEBI:18420"/>
    </ligand>
</feature>
<feature type="binding site" evidence="1">
    <location>
        <position position="36"/>
    </location>
    <ligand>
        <name>substrate</name>
    </ligand>
</feature>
<feature type="binding site" evidence="1">
    <location>
        <position position="60"/>
    </location>
    <ligand>
        <name>substrate</name>
    </ligand>
</feature>
<feature type="binding site" evidence="1">
    <location>
        <position position="82"/>
    </location>
    <ligand>
        <name>substrate</name>
    </ligand>
</feature>
<feature type="binding site" evidence="1">
    <location>
        <position position="120"/>
    </location>
    <ligand>
        <name>ATP</name>
        <dbReference type="ChEBI" id="CHEBI:30616"/>
    </ligand>
</feature>
<feature type="binding site" evidence="1">
    <location>
        <position position="140"/>
    </location>
    <ligand>
        <name>substrate</name>
    </ligand>
</feature>
<feature type="binding site" evidence="1">
    <location>
        <position position="157"/>
    </location>
    <ligand>
        <name>ATP</name>
        <dbReference type="ChEBI" id="CHEBI:30616"/>
    </ligand>
</feature>
<proteinExistence type="inferred from homology"/>